<organism>
    <name type="scientific">Rattus norvegicus</name>
    <name type="common">Rat</name>
    <dbReference type="NCBI Taxonomy" id="10116"/>
    <lineage>
        <taxon>Eukaryota</taxon>
        <taxon>Metazoa</taxon>
        <taxon>Chordata</taxon>
        <taxon>Craniata</taxon>
        <taxon>Vertebrata</taxon>
        <taxon>Euteleostomi</taxon>
        <taxon>Mammalia</taxon>
        <taxon>Eutheria</taxon>
        <taxon>Euarchontoglires</taxon>
        <taxon>Glires</taxon>
        <taxon>Rodentia</taxon>
        <taxon>Myomorpha</taxon>
        <taxon>Muroidea</taxon>
        <taxon>Muridae</taxon>
        <taxon>Murinae</taxon>
        <taxon>Rattus</taxon>
    </lineage>
</organism>
<gene>
    <name evidence="9" type="primary">Gsta3</name>
    <name type="synonym">Gstyc1</name>
</gene>
<sequence length="221" mass="25319">MPGKPVLHYFDGRGRMEPIRWLLAAAGVEFEEQFLKTRDDLARLRNDGSLMFQQVPMVEIDGMKLVQTRAILNYIATKYNLYGKDMKERALIDMYAEGVADLDEIVLHYPYIPPGEKEASLAKIKDKARNRYFPAFEKVLKSHGQDYLVGNRLSRADVYLVQVLYHVEELDPSALANFPLLKALRTRVSNLPTVKKFLQPGSQRKPLEDEKCVESAVKIFS</sequence>
<dbReference type="EC" id="2.5.1.18"/>
<dbReference type="EMBL" id="X78848">
    <property type="protein sequence ID" value="CAA55405.1"/>
    <property type="molecule type" value="mRNA"/>
</dbReference>
<dbReference type="EMBL" id="S72505">
    <property type="protein sequence ID" value="AAP21064.1"/>
    <property type="molecule type" value="mRNA"/>
</dbReference>
<dbReference type="EMBL" id="K01932">
    <property type="protein sequence ID" value="AAA41294.1"/>
    <property type="molecule type" value="mRNA"/>
</dbReference>
<dbReference type="EMBL" id="AF111160">
    <property type="protein sequence ID" value="AAD28714.1"/>
    <property type="molecule type" value="mRNA"/>
</dbReference>
<dbReference type="EMBL" id="BC059128">
    <property type="protein sequence ID" value="AAH59128.1"/>
    <property type="molecule type" value="mRNA"/>
</dbReference>
<dbReference type="EMBL" id="BC088127">
    <property type="protein sequence ID" value="AAH88127.1"/>
    <property type="molecule type" value="mRNA"/>
</dbReference>
<dbReference type="PIR" id="A26753">
    <property type="entry name" value="A26753"/>
</dbReference>
<dbReference type="RefSeq" id="XP_017452251.1">
    <property type="nucleotide sequence ID" value="XM_017596762.1"/>
</dbReference>
<dbReference type="SMR" id="P04904"/>
<dbReference type="FunCoup" id="P04904">
    <property type="interactions" value="145"/>
</dbReference>
<dbReference type="STRING" id="10116.ENSRNOP00000018325"/>
<dbReference type="ChEMBL" id="CHEMBL4436"/>
<dbReference type="iPTMnet" id="P04904"/>
<dbReference type="PhosphoSitePlus" id="P04904"/>
<dbReference type="SwissPalm" id="P04904"/>
<dbReference type="PaxDb" id="10116-ENSRNOP00000018325"/>
<dbReference type="Ensembl" id="ENSRNOT00000018325.5">
    <property type="protein sequence ID" value="ENSRNOP00000018325.3"/>
    <property type="gene ID" value="ENSRNOG00000013484.6"/>
</dbReference>
<dbReference type="GeneID" id="24421"/>
<dbReference type="KEGG" id="rno:24421"/>
<dbReference type="AGR" id="RGD:2753"/>
<dbReference type="CTD" id="2938"/>
<dbReference type="RGD" id="1591980">
    <property type="gene designation" value="Gsta3"/>
</dbReference>
<dbReference type="eggNOG" id="KOG1695">
    <property type="taxonomic scope" value="Eukaryota"/>
</dbReference>
<dbReference type="GeneTree" id="ENSGT00940000163367"/>
<dbReference type="HOGENOM" id="CLU_039475_4_0_1"/>
<dbReference type="InParanoid" id="P04904"/>
<dbReference type="OMA" id="NEMFIML"/>
<dbReference type="OrthoDB" id="414243at2759"/>
<dbReference type="PhylomeDB" id="P04904"/>
<dbReference type="TreeFam" id="TF105321"/>
<dbReference type="BRENDA" id="2.5.1.18">
    <property type="organism ID" value="5301"/>
</dbReference>
<dbReference type="Reactome" id="R-RNO-156590">
    <property type="pathway name" value="Glutathione conjugation"/>
</dbReference>
<dbReference type="Reactome" id="R-RNO-189483">
    <property type="pathway name" value="Heme degradation"/>
</dbReference>
<dbReference type="Reactome" id="R-RNO-9748787">
    <property type="pathway name" value="Azathioprine ADME"/>
</dbReference>
<dbReference type="PRO" id="PR:P04904"/>
<dbReference type="Proteomes" id="UP000002494">
    <property type="component" value="Chromosome 9"/>
</dbReference>
<dbReference type="Bgee" id="ENSRNOG00000013484">
    <property type="expression patterns" value="Expressed in ovary and 19 other cell types or tissues"/>
</dbReference>
<dbReference type="ExpressionAtlas" id="P04904">
    <property type="expression patterns" value="baseline and differential"/>
</dbReference>
<dbReference type="GO" id="GO:0005829">
    <property type="term" value="C:cytosol"/>
    <property type="evidence" value="ECO:0000314"/>
    <property type="project" value="CAFA"/>
</dbReference>
<dbReference type="GO" id="GO:0043295">
    <property type="term" value="F:glutathione binding"/>
    <property type="evidence" value="ECO:0000314"/>
    <property type="project" value="CAFA"/>
</dbReference>
<dbReference type="GO" id="GO:0004364">
    <property type="term" value="F:glutathione transferase activity"/>
    <property type="evidence" value="ECO:0000314"/>
    <property type="project" value="CAFA"/>
</dbReference>
<dbReference type="GO" id="GO:0006749">
    <property type="term" value="P:glutathione metabolic process"/>
    <property type="evidence" value="ECO:0000318"/>
    <property type="project" value="GO_Central"/>
</dbReference>
<dbReference type="GO" id="GO:0006629">
    <property type="term" value="P:lipid metabolic process"/>
    <property type="evidence" value="ECO:0007669"/>
    <property type="project" value="UniProtKB-KW"/>
</dbReference>
<dbReference type="GO" id="GO:0042178">
    <property type="term" value="P:xenobiotic catabolic process"/>
    <property type="evidence" value="ECO:0000314"/>
    <property type="project" value="CAFA"/>
</dbReference>
<dbReference type="GO" id="GO:0006805">
    <property type="term" value="P:xenobiotic metabolic process"/>
    <property type="evidence" value="ECO:0000318"/>
    <property type="project" value="GO_Central"/>
</dbReference>
<dbReference type="CDD" id="cd03208">
    <property type="entry name" value="GST_C_Alpha"/>
    <property type="match status" value="1"/>
</dbReference>
<dbReference type="CDD" id="cd03077">
    <property type="entry name" value="GST_N_Alpha"/>
    <property type="match status" value="1"/>
</dbReference>
<dbReference type="FunFam" id="1.20.1050.10:FF:000005">
    <property type="entry name" value="Glutathione S-transferase A1"/>
    <property type="match status" value="1"/>
</dbReference>
<dbReference type="Gene3D" id="1.20.1050.10">
    <property type="match status" value="1"/>
</dbReference>
<dbReference type="Gene3D" id="3.40.30.10">
    <property type="entry name" value="Glutaredoxin"/>
    <property type="match status" value="1"/>
</dbReference>
<dbReference type="InterPro" id="IPR010987">
    <property type="entry name" value="Glutathione-S-Trfase_C-like"/>
</dbReference>
<dbReference type="InterPro" id="IPR036282">
    <property type="entry name" value="Glutathione-S-Trfase_C_sf"/>
</dbReference>
<dbReference type="InterPro" id="IPR040079">
    <property type="entry name" value="Glutathione_S-Trfase"/>
</dbReference>
<dbReference type="InterPro" id="IPR004045">
    <property type="entry name" value="Glutathione_S-Trfase_N"/>
</dbReference>
<dbReference type="InterPro" id="IPR003080">
    <property type="entry name" value="GST_alpha"/>
</dbReference>
<dbReference type="InterPro" id="IPR004046">
    <property type="entry name" value="GST_C"/>
</dbReference>
<dbReference type="InterPro" id="IPR050213">
    <property type="entry name" value="GST_superfamily"/>
</dbReference>
<dbReference type="InterPro" id="IPR036249">
    <property type="entry name" value="Thioredoxin-like_sf"/>
</dbReference>
<dbReference type="PANTHER" id="PTHR11571">
    <property type="entry name" value="GLUTATHIONE S-TRANSFERASE"/>
    <property type="match status" value="1"/>
</dbReference>
<dbReference type="PANTHER" id="PTHR11571:SF107">
    <property type="entry name" value="GLUTATHIONE S-TRANSFERASE A1"/>
    <property type="match status" value="1"/>
</dbReference>
<dbReference type="Pfam" id="PF00043">
    <property type="entry name" value="GST_C"/>
    <property type="match status" value="1"/>
</dbReference>
<dbReference type="Pfam" id="PF02798">
    <property type="entry name" value="GST_N"/>
    <property type="match status" value="1"/>
</dbReference>
<dbReference type="PRINTS" id="PR01266">
    <property type="entry name" value="GSTRNSFRASEA"/>
</dbReference>
<dbReference type="SFLD" id="SFLDG01205">
    <property type="entry name" value="AMPS.1"/>
    <property type="match status" value="1"/>
</dbReference>
<dbReference type="SFLD" id="SFLDS00019">
    <property type="entry name" value="Glutathione_Transferase_(cytos"/>
    <property type="match status" value="1"/>
</dbReference>
<dbReference type="SUPFAM" id="SSF47616">
    <property type="entry name" value="GST C-terminal domain-like"/>
    <property type="match status" value="1"/>
</dbReference>
<dbReference type="SUPFAM" id="SSF52833">
    <property type="entry name" value="Thioredoxin-like"/>
    <property type="match status" value="1"/>
</dbReference>
<dbReference type="PROSITE" id="PS50405">
    <property type="entry name" value="GST_CTER"/>
    <property type="match status" value="1"/>
</dbReference>
<dbReference type="PROSITE" id="PS50404">
    <property type="entry name" value="GST_NTER"/>
    <property type="match status" value="1"/>
</dbReference>
<accession>P04904</accession>
<accession>Q6LD92</accession>
<evidence type="ECO:0000250" key="1">
    <source>
        <dbReference type="UniProtKB" id="P08263"/>
    </source>
</evidence>
<evidence type="ECO:0000250" key="2">
    <source>
        <dbReference type="UniProtKB" id="P13745"/>
    </source>
</evidence>
<evidence type="ECO:0000250" key="3">
    <source>
        <dbReference type="UniProtKB" id="P30115"/>
    </source>
</evidence>
<evidence type="ECO:0000250" key="4">
    <source>
        <dbReference type="UniProtKB" id="P30711"/>
    </source>
</evidence>
<evidence type="ECO:0000250" key="5">
    <source>
        <dbReference type="UniProtKB" id="Q16772"/>
    </source>
</evidence>
<evidence type="ECO:0000269" key="6">
    <source>
    </source>
</evidence>
<evidence type="ECO:0000269" key="7">
    <source ref="5"/>
</evidence>
<evidence type="ECO:0000305" key="8"/>
<evidence type="ECO:0000312" key="9">
    <source>
        <dbReference type="RGD" id="1591980"/>
    </source>
</evidence>
<proteinExistence type="evidence at protein level"/>
<feature type="initiator methionine" description="Removed" evidence="6 7">
    <location>
        <position position="1"/>
    </location>
</feature>
<feature type="chain" id="PRO_0000185794" description="Glutathione S-transferase alpha-3">
    <location>
        <begin position="2"/>
        <end position="221"/>
    </location>
</feature>
<feature type="domain" description="GST N-terminal">
    <location>
        <begin position="3"/>
        <end position="83"/>
    </location>
</feature>
<feature type="domain" description="GST C-terminal">
    <location>
        <begin position="85"/>
        <end position="207"/>
    </location>
</feature>
<feature type="binding site" evidence="2">
    <location>
        <position position="9"/>
    </location>
    <ligand>
        <name>glutathione</name>
        <dbReference type="ChEBI" id="CHEBI:57925"/>
    </ligand>
</feature>
<feature type="binding site" evidence="1">
    <location>
        <position position="45"/>
    </location>
    <ligand>
        <name>glutathione</name>
        <dbReference type="ChEBI" id="CHEBI:57925"/>
    </ligand>
</feature>
<feature type="binding site" evidence="4">
    <location>
        <begin position="54"/>
        <end position="55"/>
    </location>
    <ligand>
        <name>glutathione</name>
        <dbReference type="ChEBI" id="CHEBI:57925"/>
    </ligand>
</feature>
<feature type="binding site" evidence="2">
    <location>
        <begin position="67"/>
        <end position="68"/>
    </location>
    <ligand>
        <name>glutathione</name>
        <dbReference type="ChEBI" id="CHEBI:57925"/>
    </ligand>
</feature>
<feature type="modified residue" description="N6-succinyllysine" evidence="3">
    <location>
        <position position="4"/>
    </location>
</feature>
<feature type="sequence conflict" description="In Ref. 2." evidence="8" ref="2">
    <original>L</original>
    <variation>I</variation>
    <location>
        <position position="102"/>
    </location>
</feature>
<feature type="sequence conflict" description="In Ref. 2." evidence="8" ref="2">
    <original>L</original>
    <variation>K</variation>
    <location>
        <position position="184"/>
    </location>
</feature>
<protein>
    <recommendedName>
        <fullName evidence="8">Glutathione S-transferase alpha-3</fullName>
        <ecNumber>2.5.1.18</ecNumber>
    </recommendedName>
    <alternativeName>
        <fullName>GST 2-2</fullName>
    </alternativeName>
    <alternativeName>
        <fullName>GST A3-3</fullName>
    </alternativeName>
    <alternativeName>
        <fullName>GST AA</fullName>
    </alternativeName>
    <alternativeName>
        <fullName>Glutathione S-transferase Yc-1</fullName>
        <shortName>GST Yc1</shortName>
    </alternativeName>
</protein>
<reference key="1">
    <citation type="journal article" date="1994" name="J. Biol. Chem.">
        <title>Cloning of cDNAs from fetal rat liver encoding glutathione S-transferase Yc polypeptides. The Yc2 subunit is expressed in adult rat liver resistant to the hepatocarcinogen aflatoxin B1.</title>
        <authorList>
            <person name="Hayes J.D."/>
            <person name="Nguyen T."/>
            <person name="Judah D.J."/>
            <person name="Petersson D.G."/>
            <person name="Neal G.E."/>
        </authorList>
    </citation>
    <scope>NUCLEOTIDE SEQUENCE [MRNA]</scope>
    <source>
        <strain>Fischer 344</strain>
        <tissue>Liver</tissue>
    </source>
</reference>
<reference key="2">
    <citation type="journal article" date="1985" name="J. Biol. Chem.">
        <title>Rat liver glutathione S-transferases. Construction of a cDNA clone complementary to a Yc mRNA and prediction of the complete amino acid sequence of a Yc subunit.</title>
        <authorList>
            <person name="Telakowski-Hopkins C.A."/>
            <person name="Rodkey K.A."/>
            <person name="Bennett C.D."/>
            <person name="Lu A.Y.H."/>
            <person name="Pickett C.B."/>
        </authorList>
    </citation>
    <scope>NUCLEOTIDE SEQUENCE [MRNA]</scope>
</reference>
<reference key="3">
    <citation type="journal article" date="1999" name="Biochem. J.">
        <title>Genomic cloning and characterization of the rat glutathione S-transferase-A3-subunit gene.</title>
        <authorList>
            <person name="Fotouhi-Ardakani N."/>
            <person name="Batist G."/>
        </authorList>
    </citation>
    <scope>NUCLEOTIDE SEQUENCE [MRNA]</scope>
    <source>
        <strain>Fischer</strain>
        <tissue>Liver</tissue>
    </source>
</reference>
<reference key="4">
    <citation type="journal article" date="2004" name="Genome Res.">
        <title>The status, quality, and expansion of the NIH full-length cDNA project: the Mammalian Gene Collection (MGC).</title>
        <authorList>
            <consortium name="The MGC Project Team"/>
        </authorList>
    </citation>
    <scope>NUCLEOTIDE SEQUENCE [LARGE SCALE MRNA]</scope>
    <source>
        <tissue>Liver</tissue>
        <tissue>Pituitary</tissue>
    </source>
</reference>
<reference key="5">
    <citation type="submission" date="2007-07" db="UniProtKB">
        <authorList>
            <person name="Lubec G."/>
            <person name="Afjehi-Sadat L."/>
            <person name="Chen W.-Q."/>
            <person name="Kang S.U."/>
        </authorList>
    </citation>
    <scope>PROTEIN SEQUENCE OF 2-13; 21-36; 70-78; 142-152; 156-182; 188-195 AND 197-204</scope>
    <scope>IDENTIFICATION BY MASS SPECTROMETRY</scope>
    <source>
        <strain>Sprague-Dawley</strain>
        <tissue>Brain</tissue>
        <tissue>Hippocampus</tissue>
        <tissue>Spinal cord</tissue>
    </source>
</reference>
<reference key="6">
    <citation type="journal article" date="1984" name="J. Biol. Chem.">
        <title>The Yc and Ya subunits of rat liver glutathione S-transferases are the products of separate genes.</title>
        <authorList>
            <person name="Tu C.-P.D."/>
            <person name="Lai H.-C.J."/>
            <person name="Li N.-Q."/>
            <person name="Weiss M.J."/>
            <person name="Reddy C.C."/>
        </authorList>
    </citation>
    <scope>NUCLEOTIDE SEQUENCE [MRNA] OF 75-221</scope>
</reference>
<reference key="7">
    <citation type="journal article" date="1991" name="Biochem. J.">
        <title>Ethoxyquin-induced resistance to aflatoxin B1 in the rat is associated with the expression of a novel alpha-class glutathione S-transferase subunit, Yc2, which possesses high catalytic activity for aflatoxin B1-8,9-epoxide.</title>
        <authorList>
            <person name="Hayes J.D."/>
            <person name="Judah D.J."/>
            <person name="McLellan L.I."/>
            <person name="Kerr L.A."/>
            <person name="Peacock S.D."/>
            <person name="Neal G.E."/>
        </authorList>
    </citation>
    <scope>PARTIAL PROTEIN SEQUENCE</scope>
    <source>
        <strain>Fischer 344</strain>
        <tissue>Liver</tissue>
    </source>
</reference>
<reference key="8">
    <citation type="journal article" date="1990" name="Arch. Biochem. Biophys.">
        <title>Expression in Escherichia coli of rat liver cytosolic glutathione S-transferase Yc cDNA.</title>
        <authorList>
            <person name="Huskey S.E."/>
            <person name="Wang R.W."/>
            <person name="Linemeyer D.L."/>
            <person name="Pickett C.B."/>
            <person name="Lu A.Y.H."/>
        </authorList>
    </citation>
    <scope>PROTEIN SEQUENCE OF 2-31</scope>
</reference>
<keyword id="KW-0963">Cytoplasm</keyword>
<keyword id="KW-0903">Direct protein sequencing</keyword>
<keyword id="KW-0443">Lipid metabolism</keyword>
<keyword id="KW-1185">Reference proteome</keyword>
<keyword id="KW-0808">Transferase</keyword>
<name>GSTA3_RAT</name>
<comment type="function">
    <text evidence="3 5">Conjugation of reduced glutathione to a wide number of exogenous and endogenous hydrophobic electrophiles. Catalyzes isomerization reactions that contribute to the biosynthesis of steroid hormones. Efficiently catalyze obligatory double-bond isomerizations of delta(5)-androstene-3,17-dione and delta(5)-pregnene-3,20-dione, precursors to testosterone and progesterone, respectively (By similarity). Has substantial activity toward aflatoxin B1-8,9-epoxide (By similarity).</text>
</comment>
<comment type="catalytic activity">
    <reaction evidence="5">
        <text>RX + glutathione = an S-substituted glutathione + a halide anion + H(+)</text>
        <dbReference type="Rhea" id="RHEA:16437"/>
        <dbReference type="ChEBI" id="CHEBI:15378"/>
        <dbReference type="ChEBI" id="CHEBI:16042"/>
        <dbReference type="ChEBI" id="CHEBI:17792"/>
        <dbReference type="ChEBI" id="CHEBI:57925"/>
        <dbReference type="ChEBI" id="CHEBI:90779"/>
        <dbReference type="EC" id="2.5.1.18"/>
    </reaction>
    <physiologicalReaction direction="left-to-right" evidence="5">
        <dbReference type="Rhea" id="RHEA:16438"/>
    </physiologicalReaction>
</comment>
<comment type="catalytic activity">
    <reaction evidence="5">
        <text>androst-5-ene-3,17-dione = androst-4-ene-3,17-dione</text>
        <dbReference type="Rhea" id="RHEA:43936"/>
        <dbReference type="ChEBI" id="CHEBI:16422"/>
        <dbReference type="ChEBI" id="CHEBI:83865"/>
    </reaction>
    <physiologicalReaction direction="left-to-right" evidence="5">
        <dbReference type="Rhea" id="RHEA:43937"/>
    </physiologicalReaction>
</comment>
<comment type="catalytic activity">
    <reaction evidence="5">
        <text>pregn-5-ene-3,20-dione = progesterone</text>
        <dbReference type="Rhea" id="RHEA:43928"/>
        <dbReference type="ChEBI" id="CHEBI:17026"/>
        <dbReference type="ChEBI" id="CHEBI:63837"/>
    </reaction>
    <physiologicalReaction direction="left-to-right" evidence="5">
        <dbReference type="Rhea" id="RHEA:43929"/>
    </physiologicalReaction>
</comment>
<comment type="subunit">
    <text>Heterodimer of YC1 and YC2.</text>
</comment>
<comment type="subcellular location">
    <subcellularLocation>
        <location>Cytoplasm</location>
    </subcellularLocation>
</comment>
<comment type="developmental stage">
    <text>Liver from adult female rats contains about 2-fold greater levels of YC1 than is found in liver from adult male rats.</text>
</comment>
<comment type="similarity">
    <text evidence="8">Belongs to the GST superfamily. Alpha family.</text>
</comment>